<gene>
    <name evidence="1" type="primary">psbF</name>
</gene>
<proteinExistence type="inferred from homology"/>
<dbReference type="EMBL" id="AF528870">
    <property type="protein sequence ID" value="AAQ09279.1"/>
    <property type="molecule type" value="Genomic_DNA"/>
</dbReference>
<dbReference type="SMR" id="Q6EYU4"/>
<dbReference type="GO" id="GO:0009535">
    <property type="term" value="C:chloroplast thylakoid membrane"/>
    <property type="evidence" value="ECO:0007669"/>
    <property type="project" value="UniProtKB-SubCell"/>
</dbReference>
<dbReference type="GO" id="GO:0009539">
    <property type="term" value="C:photosystem II reaction center"/>
    <property type="evidence" value="ECO:0007669"/>
    <property type="project" value="InterPro"/>
</dbReference>
<dbReference type="GO" id="GO:0009055">
    <property type="term" value="F:electron transfer activity"/>
    <property type="evidence" value="ECO:0007669"/>
    <property type="project" value="UniProtKB-UniRule"/>
</dbReference>
<dbReference type="GO" id="GO:0020037">
    <property type="term" value="F:heme binding"/>
    <property type="evidence" value="ECO:0007669"/>
    <property type="project" value="InterPro"/>
</dbReference>
<dbReference type="GO" id="GO:0005506">
    <property type="term" value="F:iron ion binding"/>
    <property type="evidence" value="ECO:0007669"/>
    <property type="project" value="UniProtKB-UniRule"/>
</dbReference>
<dbReference type="GO" id="GO:0009767">
    <property type="term" value="P:photosynthetic electron transport chain"/>
    <property type="evidence" value="ECO:0007669"/>
    <property type="project" value="InterPro"/>
</dbReference>
<dbReference type="HAMAP" id="MF_00643">
    <property type="entry name" value="PSII_PsbF"/>
    <property type="match status" value="1"/>
</dbReference>
<dbReference type="InterPro" id="IPR006241">
    <property type="entry name" value="PSII_cyt_b559_bsu"/>
</dbReference>
<dbReference type="InterPro" id="IPR006216">
    <property type="entry name" value="PSII_cyt_b559_CS"/>
</dbReference>
<dbReference type="InterPro" id="IPR013081">
    <property type="entry name" value="PSII_cyt_b559_N"/>
</dbReference>
<dbReference type="NCBIfam" id="TIGR01333">
    <property type="entry name" value="cyt_b559_beta"/>
    <property type="match status" value="1"/>
</dbReference>
<dbReference type="Pfam" id="PF00283">
    <property type="entry name" value="Cytochrom_B559"/>
    <property type="match status" value="1"/>
</dbReference>
<dbReference type="PIRSF" id="PIRSF000037">
    <property type="entry name" value="PsbF"/>
    <property type="match status" value="1"/>
</dbReference>
<dbReference type="SUPFAM" id="SSF161045">
    <property type="entry name" value="Cytochrome b559 subunits"/>
    <property type="match status" value="1"/>
</dbReference>
<dbReference type="PROSITE" id="PS00537">
    <property type="entry name" value="CYTOCHROME_B559"/>
    <property type="match status" value="1"/>
</dbReference>
<sequence>MTIDRTYPIFTVRWLAVHGLAVPTVSFLGSISAMQFIQR</sequence>
<protein>
    <recommendedName>
        <fullName evidence="1">Cytochrome b559 subunit beta</fullName>
    </recommendedName>
    <alternativeName>
        <fullName evidence="1">PSII reaction center subunit VI</fullName>
    </alternativeName>
</protein>
<evidence type="ECO:0000255" key="1">
    <source>
        <dbReference type="HAMAP-Rule" id="MF_00643"/>
    </source>
</evidence>
<comment type="function">
    <text evidence="1">This b-type cytochrome is tightly associated with the reaction center of photosystem II (PSII). PSII is a light-driven water:plastoquinone oxidoreductase that uses light energy to abstract electrons from H(2)O, generating O(2) and a proton gradient subsequently used for ATP formation. It consists of a core antenna complex that captures photons, and an electron transfer chain that converts photonic excitation into a charge separation.</text>
</comment>
<comment type="cofactor">
    <cofactor evidence="1">
        <name>heme b</name>
        <dbReference type="ChEBI" id="CHEBI:60344"/>
    </cofactor>
    <text evidence="1">With its partner (PsbE) binds heme. PSII binds additional chlorophylls, carotenoids and specific lipids.</text>
</comment>
<comment type="subunit">
    <text evidence="1">Heterodimer of an alpha subunit and a beta subunit. PSII is composed of 1 copy each of membrane proteins PsbA, PsbB, PsbC, PsbD, PsbE, PsbF, PsbH, PsbI, PsbJ, PsbK, PsbL, PsbM, PsbT, PsbX, PsbY, PsbZ, Psb30/Ycf12, at least 3 peripheral proteins of the oxygen-evolving complex and a large number of cofactors. It forms dimeric complexes.</text>
</comment>
<comment type="subcellular location">
    <subcellularLocation>
        <location evidence="1">Plastid</location>
        <location evidence="1">Chloroplast thylakoid membrane</location>
        <topology evidence="1">Single-pass membrane protein</topology>
    </subcellularLocation>
</comment>
<comment type="similarity">
    <text evidence="1">Belongs to the PsbE/PsbF family.</text>
</comment>
<keyword id="KW-0150">Chloroplast</keyword>
<keyword id="KW-0249">Electron transport</keyword>
<keyword id="KW-0349">Heme</keyword>
<keyword id="KW-0408">Iron</keyword>
<keyword id="KW-0472">Membrane</keyword>
<keyword id="KW-0479">Metal-binding</keyword>
<keyword id="KW-0602">Photosynthesis</keyword>
<keyword id="KW-0604">Photosystem II</keyword>
<keyword id="KW-0934">Plastid</keyword>
<keyword id="KW-0793">Thylakoid</keyword>
<keyword id="KW-0812">Transmembrane</keyword>
<keyword id="KW-1133">Transmembrane helix</keyword>
<keyword id="KW-0813">Transport</keyword>
<name>PSBF_CORMA</name>
<geneLocation type="chloroplast"/>
<organism>
    <name type="scientific">Cornus mas</name>
    <name type="common">Cornelian cherry dogwood</name>
    <dbReference type="NCBI Taxonomy" id="4285"/>
    <lineage>
        <taxon>Eukaryota</taxon>
        <taxon>Viridiplantae</taxon>
        <taxon>Streptophyta</taxon>
        <taxon>Embryophyta</taxon>
        <taxon>Tracheophyta</taxon>
        <taxon>Spermatophyta</taxon>
        <taxon>Magnoliopsida</taxon>
        <taxon>eudicotyledons</taxon>
        <taxon>Gunneridae</taxon>
        <taxon>Pentapetalae</taxon>
        <taxon>asterids</taxon>
        <taxon>Cornales</taxon>
        <taxon>Cornaceae</taxon>
        <taxon>Cornus</taxon>
    </lineage>
</organism>
<accession>Q6EYU4</accession>
<reference key="1">
    <citation type="submission" date="2002-07" db="EMBL/GenBank/DDBJ databases">
        <title>Parsing out signal and noise for seed-plant phylogenetic inference.</title>
        <authorList>
            <person name="Graham S.W."/>
            <person name="Rai H.S."/>
            <person name="Ikegami K."/>
            <person name="Reeves P.A."/>
            <person name="Olmstead R.G."/>
        </authorList>
    </citation>
    <scope>NUCLEOTIDE SEQUENCE [GENOMIC DNA]</scope>
</reference>
<feature type="chain" id="PRO_0000200378" description="Cytochrome b559 subunit beta">
    <location>
        <begin position="1"/>
        <end position="39"/>
    </location>
</feature>
<feature type="transmembrane region" description="Helical" evidence="1">
    <location>
        <begin position="14"/>
        <end position="30"/>
    </location>
</feature>
<feature type="binding site" description="axial binding residue" evidence="1">
    <location>
        <position position="18"/>
    </location>
    <ligand>
        <name>heme</name>
        <dbReference type="ChEBI" id="CHEBI:30413"/>
        <note>ligand shared with alpha subunit</note>
    </ligand>
    <ligandPart>
        <name>Fe</name>
        <dbReference type="ChEBI" id="CHEBI:18248"/>
    </ligandPart>
</feature>